<reference key="1">
    <citation type="journal article" date="2008" name="PLoS ONE">
        <title>Comparative analysis of Acinetobacters: three genomes for three lifestyles.</title>
        <authorList>
            <person name="Vallenet D."/>
            <person name="Nordmann P."/>
            <person name="Barbe V."/>
            <person name="Poirel L."/>
            <person name="Mangenot S."/>
            <person name="Bataille E."/>
            <person name="Dossat C."/>
            <person name="Gas S."/>
            <person name="Kreimeyer A."/>
            <person name="Lenoble P."/>
            <person name="Oztas S."/>
            <person name="Poulain J."/>
            <person name="Segurens B."/>
            <person name="Robert C."/>
            <person name="Abergel C."/>
            <person name="Claverie J.-M."/>
            <person name="Raoult D."/>
            <person name="Medigue C."/>
            <person name="Weissenbach J."/>
            <person name="Cruveiller S."/>
        </authorList>
    </citation>
    <scope>NUCLEOTIDE SEQUENCE [LARGE SCALE GENOMIC DNA]</scope>
    <source>
        <strain>AYE</strain>
    </source>
</reference>
<organism>
    <name type="scientific">Acinetobacter baumannii (strain AYE)</name>
    <dbReference type="NCBI Taxonomy" id="509173"/>
    <lineage>
        <taxon>Bacteria</taxon>
        <taxon>Pseudomonadati</taxon>
        <taxon>Pseudomonadota</taxon>
        <taxon>Gammaproteobacteria</taxon>
        <taxon>Moraxellales</taxon>
        <taxon>Moraxellaceae</taxon>
        <taxon>Acinetobacter</taxon>
        <taxon>Acinetobacter calcoaceticus/baumannii complex</taxon>
    </lineage>
</organism>
<keyword id="KW-0547">Nucleotide-binding</keyword>
<comment type="function">
    <text evidence="1">Nucleotide-binding protein.</text>
</comment>
<comment type="similarity">
    <text evidence="1">Belongs to the YajQ family.</text>
</comment>
<proteinExistence type="inferred from homology"/>
<gene>
    <name type="ordered locus">ABAYE0515</name>
</gene>
<feature type="chain" id="PRO_1000130590" description="Nucleotide-binding protein ABAYE0515">
    <location>
        <begin position="1"/>
        <end position="162"/>
    </location>
</feature>
<protein>
    <recommendedName>
        <fullName evidence="1">Nucleotide-binding protein ABAYE0515</fullName>
    </recommendedName>
</protein>
<accession>B0V634</accession>
<dbReference type="EMBL" id="CU459141">
    <property type="protein sequence ID" value="CAM85483.1"/>
    <property type="molecule type" value="Genomic_DNA"/>
</dbReference>
<dbReference type="RefSeq" id="WP_001138893.1">
    <property type="nucleotide sequence ID" value="NZ_JBDGFB010000017.1"/>
</dbReference>
<dbReference type="SMR" id="B0V634"/>
<dbReference type="EnsemblBacteria" id="CAM85483">
    <property type="protein sequence ID" value="CAM85483"/>
    <property type="gene ID" value="ABAYE0515"/>
</dbReference>
<dbReference type="KEGG" id="aby:ABAYE0515"/>
<dbReference type="HOGENOM" id="CLU_099839_1_0_6"/>
<dbReference type="GO" id="GO:0005829">
    <property type="term" value="C:cytosol"/>
    <property type="evidence" value="ECO:0007669"/>
    <property type="project" value="TreeGrafter"/>
</dbReference>
<dbReference type="GO" id="GO:0000166">
    <property type="term" value="F:nucleotide binding"/>
    <property type="evidence" value="ECO:0007669"/>
    <property type="project" value="TreeGrafter"/>
</dbReference>
<dbReference type="CDD" id="cd11740">
    <property type="entry name" value="YajQ_like"/>
    <property type="match status" value="1"/>
</dbReference>
<dbReference type="Gene3D" id="3.30.70.860">
    <property type="match status" value="1"/>
</dbReference>
<dbReference type="Gene3D" id="3.30.70.990">
    <property type="entry name" value="YajQ-like, domain 2"/>
    <property type="match status" value="1"/>
</dbReference>
<dbReference type="HAMAP" id="MF_00632">
    <property type="entry name" value="YajQ"/>
    <property type="match status" value="1"/>
</dbReference>
<dbReference type="InterPro" id="IPR007551">
    <property type="entry name" value="DUF520"/>
</dbReference>
<dbReference type="InterPro" id="IPR035571">
    <property type="entry name" value="UPF0234-like_C"/>
</dbReference>
<dbReference type="InterPro" id="IPR035570">
    <property type="entry name" value="UPF0234_N"/>
</dbReference>
<dbReference type="InterPro" id="IPR036183">
    <property type="entry name" value="YajQ-like_sf"/>
</dbReference>
<dbReference type="NCBIfam" id="NF003819">
    <property type="entry name" value="PRK05412.1"/>
    <property type="match status" value="1"/>
</dbReference>
<dbReference type="PANTHER" id="PTHR30476">
    <property type="entry name" value="UPF0234 PROTEIN YAJQ"/>
    <property type="match status" value="1"/>
</dbReference>
<dbReference type="PANTHER" id="PTHR30476:SF0">
    <property type="entry name" value="UPF0234 PROTEIN YAJQ"/>
    <property type="match status" value="1"/>
</dbReference>
<dbReference type="Pfam" id="PF04461">
    <property type="entry name" value="DUF520"/>
    <property type="match status" value="1"/>
</dbReference>
<dbReference type="SUPFAM" id="SSF89963">
    <property type="entry name" value="YajQ-like"/>
    <property type="match status" value="2"/>
</dbReference>
<sequence length="162" mass="18698">MPSFDIVSELELFEVNHAVQNTQKEIATRFDFRGHDVSIELNEKNKEIKISTESDFQCEQVYNMLENHFYKRKIDVQALDPQKATASGKNFVQVIKLKDGLDSDTAKKINKAIKESGIKVQSSIQGDKIRVTDKKRDTLQQVMAFLREQQFGLPLQFNNFKD</sequence>
<name>Y515_ACIBY</name>
<evidence type="ECO:0000255" key="1">
    <source>
        <dbReference type="HAMAP-Rule" id="MF_00632"/>
    </source>
</evidence>